<dbReference type="EMBL" id="CP000503">
    <property type="protein sequence ID" value="ABM26861.1"/>
    <property type="molecule type" value="Genomic_DNA"/>
</dbReference>
<dbReference type="RefSeq" id="WP_011791282.1">
    <property type="nucleotide sequence ID" value="NC_008750.1"/>
</dbReference>
<dbReference type="SMR" id="A1RQB6"/>
<dbReference type="GeneID" id="67445467"/>
<dbReference type="KEGG" id="shw:Sputw3181_4059"/>
<dbReference type="HOGENOM" id="CLU_041018_1_0_6"/>
<dbReference type="Proteomes" id="UP000002597">
    <property type="component" value="Chromosome"/>
</dbReference>
<dbReference type="GO" id="GO:0005886">
    <property type="term" value="C:plasma membrane"/>
    <property type="evidence" value="ECO:0007669"/>
    <property type="project" value="UniProtKB-SubCell"/>
</dbReference>
<dbReference type="GO" id="GO:0045259">
    <property type="term" value="C:proton-transporting ATP synthase complex"/>
    <property type="evidence" value="ECO:0007669"/>
    <property type="project" value="UniProtKB-KW"/>
</dbReference>
<dbReference type="GO" id="GO:0046933">
    <property type="term" value="F:proton-transporting ATP synthase activity, rotational mechanism"/>
    <property type="evidence" value="ECO:0007669"/>
    <property type="project" value="UniProtKB-UniRule"/>
</dbReference>
<dbReference type="GO" id="GO:0042777">
    <property type="term" value="P:proton motive force-driven plasma membrane ATP synthesis"/>
    <property type="evidence" value="ECO:0007669"/>
    <property type="project" value="TreeGrafter"/>
</dbReference>
<dbReference type="CDD" id="cd00310">
    <property type="entry name" value="ATP-synt_Fo_a_6"/>
    <property type="match status" value="1"/>
</dbReference>
<dbReference type="FunFam" id="1.20.120.220:FF:000002">
    <property type="entry name" value="ATP synthase subunit a"/>
    <property type="match status" value="1"/>
</dbReference>
<dbReference type="Gene3D" id="1.20.120.220">
    <property type="entry name" value="ATP synthase, F0 complex, subunit A"/>
    <property type="match status" value="1"/>
</dbReference>
<dbReference type="HAMAP" id="MF_01393">
    <property type="entry name" value="ATP_synth_a_bact"/>
    <property type="match status" value="1"/>
</dbReference>
<dbReference type="InterPro" id="IPR045082">
    <property type="entry name" value="ATP_syn_F0_a_bact/chloroplast"/>
</dbReference>
<dbReference type="InterPro" id="IPR000568">
    <property type="entry name" value="ATP_synth_F0_asu"/>
</dbReference>
<dbReference type="InterPro" id="IPR023011">
    <property type="entry name" value="ATP_synth_F0_asu_AS"/>
</dbReference>
<dbReference type="InterPro" id="IPR035908">
    <property type="entry name" value="F0_ATP_A_sf"/>
</dbReference>
<dbReference type="NCBIfam" id="TIGR01131">
    <property type="entry name" value="ATP_synt_6_or_A"/>
    <property type="match status" value="1"/>
</dbReference>
<dbReference type="NCBIfam" id="NF004477">
    <property type="entry name" value="PRK05815.1-1"/>
    <property type="match status" value="1"/>
</dbReference>
<dbReference type="PANTHER" id="PTHR42823">
    <property type="entry name" value="ATP SYNTHASE SUBUNIT A, CHLOROPLASTIC"/>
    <property type="match status" value="1"/>
</dbReference>
<dbReference type="PANTHER" id="PTHR42823:SF3">
    <property type="entry name" value="ATP SYNTHASE SUBUNIT A, CHLOROPLASTIC"/>
    <property type="match status" value="1"/>
</dbReference>
<dbReference type="Pfam" id="PF00119">
    <property type="entry name" value="ATP-synt_A"/>
    <property type="match status" value="1"/>
</dbReference>
<dbReference type="PRINTS" id="PR00123">
    <property type="entry name" value="ATPASEA"/>
</dbReference>
<dbReference type="SUPFAM" id="SSF81336">
    <property type="entry name" value="F1F0 ATP synthase subunit A"/>
    <property type="match status" value="1"/>
</dbReference>
<dbReference type="PROSITE" id="PS00449">
    <property type="entry name" value="ATPASE_A"/>
    <property type="match status" value="1"/>
</dbReference>
<proteinExistence type="inferred from homology"/>
<name>ATP6_SHESW</name>
<keyword id="KW-0066">ATP synthesis</keyword>
<keyword id="KW-0997">Cell inner membrane</keyword>
<keyword id="KW-1003">Cell membrane</keyword>
<keyword id="KW-0138">CF(0)</keyword>
<keyword id="KW-0375">Hydrogen ion transport</keyword>
<keyword id="KW-0406">Ion transport</keyword>
<keyword id="KW-0472">Membrane</keyword>
<keyword id="KW-0812">Transmembrane</keyword>
<keyword id="KW-1133">Transmembrane helix</keyword>
<keyword id="KW-0813">Transport</keyword>
<feature type="chain" id="PRO_0000362462" description="ATP synthase subunit a">
    <location>
        <begin position="1"/>
        <end position="273"/>
    </location>
</feature>
<feature type="transmembrane region" description="Helical" evidence="1">
    <location>
        <begin position="44"/>
        <end position="64"/>
    </location>
</feature>
<feature type="transmembrane region" description="Helical" evidence="1">
    <location>
        <begin position="104"/>
        <end position="124"/>
    </location>
</feature>
<feature type="transmembrane region" description="Helical" evidence="1">
    <location>
        <begin position="149"/>
        <end position="169"/>
    </location>
</feature>
<feature type="transmembrane region" description="Helical" evidence="1">
    <location>
        <begin position="223"/>
        <end position="243"/>
    </location>
</feature>
<feature type="transmembrane region" description="Helical" evidence="1">
    <location>
        <begin position="244"/>
        <end position="264"/>
    </location>
</feature>
<gene>
    <name evidence="1" type="primary">atpB</name>
    <name type="ordered locus">Sputw3181_4059</name>
</gene>
<evidence type="ECO:0000255" key="1">
    <source>
        <dbReference type="HAMAP-Rule" id="MF_01393"/>
    </source>
</evidence>
<organism>
    <name type="scientific">Shewanella sp. (strain W3-18-1)</name>
    <dbReference type="NCBI Taxonomy" id="351745"/>
    <lineage>
        <taxon>Bacteria</taxon>
        <taxon>Pseudomonadati</taxon>
        <taxon>Pseudomonadota</taxon>
        <taxon>Gammaproteobacteria</taxon>
        <taxon>Alteromonadales</taxon>
        <taxon>Shewanellaceae</taxon>
        <taxon>Shewanella</taxon>
    </lineage>
</organism>
<reference key="1">
    <citation type="submission" date="2006-12" db="EMBL/GenBank/DDBJ databases">
        <title>Complete sequence of Shewanella sp. W3-18-1.</title>
        <authorList>
            <consortium name="US DOE Joint Genome Institute"/>
            <person name="Copeland A."/>
            <person name="Lucas S."/>
            <person name="Lapidus A."/>
            <person name="Barry K."/>
            <person name="Detter J.C."/>
            <person name="Glavina del Rio T."/>
            <person name="Hammon N."/>
            <person name="Israni S."/>
            <person name="Dalin E."/>
            <person name="Tice H."/>
            <person name="Pitluck S."/>
            <person name="Chain P."/>
            <person name="Malfatti S."/>
            <person name="Shin M."/>
            <person name="Vergez L."/>
            <person name="Schmutz J."/>
            <person name="Larimer F."/>
            <person name="Land M."/>
            <person name="Hauser L."/>
            <person name="Kyrpides N."/>
            <person name="Lykidis A."/>
            <person name="Tiedje J."/>
            <person name="Richardson P."/>
        </authorList>
    </citation>
    <scope>NUCLEOTIDE SEQUENCE [LARGE SCALE GENOMIC DNA]</scope>
    <source>
        <strain>W3-18-1</strain>
    </source>
</reference>
<sequence>MATTGEALNASEYIQHHLTNAKMCSTDGGVAFNHACQDAGFWTWHIDSLLFSVGLGVLFLWLFYKTGQKATAGVPGKLQCFVEMCVEGVDKIAKESFHGKNVVIAPLALTIFIWVFLMNFMDLIPVDFIPEAANRFLGVPYLKVVPTTDLNVTLGLSLSVFVLIVFYSIKAKGIGGFTKELTLQPFNHWSLIPVNFILESVTLIAKPISLALRLFGNLYAGELIFILIALMPWWAQFALSVPWAIFHILIIVLQAFIFMMLTIVYLSMAHEEH</sequence>
<comment type="function">
    <text evidence="1">Key component of the proton channel; it plays a direct role in the translocation of protons across the membrane.</text>
</comment>
<comment type="subunit">
    <text evidence="1">F-type ATPases have 2 components, CF(1) - the catalytic core - and CF(0) - the membrane proton channel. CF(1) has five subunits: alpha(3), beta(3), gamma(1), delta(1), epsilon(1). CF(0) has three main subunits: a(1), b(2) and c(9-12). The alpha and beta chains form an alternating ring which encloses part of the gamma chain. CF(1) is attached to CF(0) by a central stalk formed by the gamma and epsilon chains, while a peripheral stalk is formed by the delta and b chains.</text>
</comment>
<comment type="subcellular location">
    <subcellularLocation>
        <location evidence="1">Cell inner membrane</location>
        <topology evidence="1">Multi-pass membrane protein</topology>
    </subcellularLocation>
</comment>
<comment type="similarity">
    <text evidence="1">Belongs to the ATPase A chain family.</text>
</comment>
<accession>A1RQB6</accession>
<protein>
    <recommendedName>
        <fullName evidence="1">ATP synthase subunit a</fullName>
    </recommendedName>
    <alternativeName>
        <fullName evidence="1">ATP synthase F0 sector subunit a</fullName>
    </alternativeName>
    <alternativeName>
        <fullName evidence="1">F-ATPase subunit 6</fullName>
    </alternativeName>
</protein>